<accession>Q6FW12</accession>
<comment type="function">
    <text evidence="1">Component of the Mediator complex, a coactivator involved in the regulated transcription of nearly all RNA polymerase II-dependent genes. Mediator functions as a bridge to convey information from gene-specific regulatory proteins to the basal RNA polymerase II transcription machinery. Mediator is recruited to promoters by direct interactions with regulatory proteins and serves as a scaffold for the assembly of a functional preinitiation complex with RNA polymerase II and the general transcription factors (By similarity).</text>
</comment>
<comment type="subunit">
    <text evidence="1">Component of the Mediator complex.</text>
</comment>
<comment type="subcellular location">
    <subcellularLocation>
        <location evidence="1">Nucleus</location>
    </subcellularLocation>
</comment>
<comment type="similarity">
    <text evidence="3">Belongs to the Mediator complex subunit 6 family.</text>
</comment>
<name>MED6_CANGA</name>
<proteinExistence type="inferred from homology"/>
<protein>
    <recommendedName>
        <fullName>Mediator of RNA polymerase II transcription subunit 6</fullName>
    </recommendedName>
    <alternativeName>
        <fullName>Mediator complex subunit 6</fullName>
    </alternativeName>
</protein>
<keyword id="KW-0010">Activator</keyword>
<keyword id="KW-0539">Nucleus</keyword>
<keyword id="KW-1185">Reference proteome</keyword>
<keyword id="KW-0804">Transcription</keyword>
<keyword id="KW-0805">Transcription regulation</keyword>
<sequence>MDTPLDELQWKSPEWIQAFGLRTDNVLDYFAESPFFDKTANNHVIKMQRQFSQLPNNGAAAGSMNPETMRDAHSEDMGQEQEFSYVDPIRRAILEKYVVHAFLERELMKVRGIEYVLANVREPDFWVIKKQRRTSPTAIEPLQTYYIVGANVYQSPTVFKIVQSRLLACSSHLSATLAELNNLVEFKPSQGVQYKNILDMPVTTRKTGNTANVGSVPGTISASLNMPMVNTGRLNSAGAATIGTSGVPNSAGMTGANTMATGQTGATSRFENGSSRSSTDAISTDTLDKLLITSMKSTPEYI</sequence>
<gene>
    <name type="primary">MED6</name>
    <name type="ordered locus">CAGL0D03828g</name>
</gene>
<reference key="1">
    <citation type="journal article" date="2004" name="Nature">
        <title>Genome evolution in yeasts.</title>
        <authorList>
            <person name="Dujon B."/>
            <person name="Sherman D."/>
            <person name="Fischer G."/>
            <person name="Durrens P."/>
            <person name="Casaregola S."/>
            <person name="Lafontaine I."/>
            <person name="de Montigny J."/>
            <person name="Marck C."/>
            <person name="Neuveglise C."/>
            <person name="Talla E."/>
            <person name="Goffard N."/>
            <person name="Frangeul L."/>
            <person name="Aigle M."/>
            <person name="Anthouard V."/>
            <person name="Babour A."/>
            <person name="Barbe V."/>
            <person name="Barnay S."/>
            <person name="Blanchin S."/>
            <person name="Beckerich J.-M."/>
            <person name="Beyne E."/>
            <person name="Bleykasten C."/>
            <person name="Boisrame A."/>
            <person name="Boyer J."/>
            <person name="Cattolico L."/>
            <person name="Confanioleri F."/>
            <person name="de Daruvar A."/>
            <person name="Despons L."/>
            <person name="Fabre E."/>
            <person name="Fairhead C."/>
            <person name="Ferry-Dumazet H."/>
            <person name="Groppi A."/>
            <person name="Hantraye F."/>
            <person name="Hennequin C."/>
            <person name="Jauniaux N."/>
            <person name="Joyet P."/>
            <person name="Kachouri R."/>
            <person name="Kerrest A."/>
            <person name="Koszul R."/>
            <person name="Lemaire M."/>
            <person name="Lesur I."/>
            <person name="Ma L."/>
            <person name="Muller H."/>
            <person name="Nicaud J.-M."/>
            <person name="Nikolski M."/>
            <person name="Oztas S."/>
            <person name="Ozier-Kalogeropoulos O."/>
            <person name="Pellenz S."/>
            <person name="Potier S."/>
            <person name="Richard G.-F."/>
            <person name="Straub M.-L."/>
            <person name="Suleau A."/>
            <person name="Swennen D."/>
            <person name="Tekaia F."/>
            <person name="Wesolowski-Louvel M."/>
            <person name="Westhof E."/>
            <person name="Wirth B."/>
            <person name="Zeniou-Meyer M."/>
            <person name="Zivanovic Y."/>
            <person name="Bolotin-Fukuhara M."/>
            <person name="Thierry A."/>
            <person name="Bouchier C."/>
            <person name="Caudron B."/>
            <person name="Scarpelli C."/>
            <person name="Gaillardin C."/>
            <person name="Weissenbach J."/>
            <person name="Wincker P."/>
            <person name="Souciet J.-L."/>
        </authorList>
    </citation>
    <scope>NUCLEOTIDE SEQUENCE [LARGE SCALE GENOMIC DNA]</scope>
    <source>
        <strain>ATCC 2001 / BCRC 20586 / JCM 3761 / NBRC 0622 / NRRL Y-65 / CBS 138</strain>
    </source>
</reference>
<organism>
    <name type="scientific">Candida glabrata (strain ATCC 2001 / BCRC 20586 / JCM 3761 / NBRC 0622 / NRRL Y-65 / CBS 138)</name>
    <name type="common">Yeast</name>
    <name type="synonym">Nakaseomyces glabratus</name>
    <dbReference type="NCBI Taxonomy" id="284593"/>
    <lineage>
        <taxon>Eukaryota</taxon>
        <taxon>Fungi</taxon>
        <taxon>Dikarya</taxon>
        <taxon>Ascomycota</taxon>
        <taxon>Saccharomycotina</taxon>
        <taxon>Saccharomycetes</taxon>
        <taxon>Saccharomycetales</taxon>
        <taxon>Saccharomycetaceae</taxon>
        <taxon>Nakaseomyces</taxon>
    </lineage>
</organism>
<evidence type="ECO:0000250" key="1"/>
<evidence type="ECO:0000256" key="2">
    <source>
        <dbReference type="SAM" id="MobiDB-lite"/>
    </source>
</evidence>
<evidence type="ECO:0000305" key="3"/>
<dbReference type="EMBL" id="CR380950">
    <property type="protein sequence ID" value="CAG58493.1"/>
    <property type="molecule type" value="Genomic_DNA"/>
</dbReference>
<dbReference type="RefSeq" id="XP_445582.1">
    <property type="nucleotide sequence ID" value="XM_445582.1"/>
</dbReference>
<dbReference type="SMR" id="Q6FW12"/>
<dbReference type="FunCoup" id="Q6FW12">
    <property type="interactions" value="899"/>
</dbReference>
<dbReference type="STRING" id="284593.Q6FW12"/>
<dbReference type="EnsemblFungi" id="CAGL0D03828g-T">
    <property type="protein sequence ID" value="CAGL0D03828g-T-p1"/>
    <property type="gene ID" value="CAGL0D03828g"/>
</dbReference>
<dbReference type="KEGG" id="cgr:2887259"/>
<dbReference type="CGD" id="CAL0128473">
    <property type="gene designation" value="CAGL0D03828g"/>
</dbReference>
<dbReference type="VEuPathDB" id="FungiDB:CAGL0D03828g"/>
<dbReference type="eggNOG" id="KOG3169">
    <property type="taxonomic scope" value="Eukaryota"/>
</dbReference>
<dbReference type="HOGENOM" id="CLU_077754_0_0_1"/>
<dbReference type="InParanoid" id="Q6FW12"/>
<dbReference type="OMA" id="MQRQFSQ"/>
<dbReference type="Proteomes" id="UP000002428">
    <property type="component" value="Chromosome D"/>
</dbReference>
<dbReference type="GO" id="GO:0070847">
    <property type="term" value="C:core mediator complex"/>
    <property type="evidence" value="ECO:0007669"/>
    <property type="project" value="EnsemblFungi"/>
</dbReference>
<dbReference type="GO" id="GO:0016592">
    <property type="term" value="C:mediator complex"/>
    <property type="evidence" value="ECO:0007669"/>
    <property type="project" value="InterPro"/>
</dbReference>
<dbReference type="GO" id="GO:0003713">
    <property type="term" value="F:transcription coactivator activity"/>
    <property type="evidence" value="ECO:0007669"/>
    <property type="project" value="EnsemblFungi"/>
</dbReference>
<dbReference type="GO" id="GO:0032968">
    <property type="term" value="P:positive regulation of transcription elongation by RNA polymerase II"/>
    <property type="evidence" value="ECO:0007669"/>
    <property type="project" value="EnsemblFungi"/>
</dbReference>
<dbReference type="GO" id="GO:0060261">
    <property type="term" value="P:positive regulation of transcription initiation by RNA polymerase II"/>
    <property type="evidence" value="ECO:0007669"/>
    <property type="project" value="EnsemblFungi"/>
</dbReference>
<dbReference type="GO" id="GO:0051123">
    <property type="term" value="P:RNA polymerase II preinitiation complex assembly"/>
    <property type="evidence" value="ECO:0007669"/>
    <property type="project" value="EnsemblFungi"/>
</dbReference>
<dbReference type="Gene3D" id="3.10.450.580">
    <property type="entry name" value="Mediator complex, subunit Med6"/>
    <property type="match status" value="1"/>
</dbReference>
<dbReference type="InterPro" id="IPR007018">
    <property type="entry name" value="Mediator_Med6"/>
</dbReference>
<dbReference type="InterPro" id="IPR016612">
    <property type="entry name" value="Mediator_Med6_fun"/>
</dbReference>
<dbReference type="InterPro" id="IPR038566">
    <property type="entry name" value="Mediator_Med6_sf"/>
</dbReference>
<dbReference type="PANTHER" id="PTHR13104">
    <property type="entry name" value="MED-6-RELATED"/>
    <property type="match status" value="1"/>
</dbReference>
<dbReference type="Pfam" id="PF04934">
    <property type="entry name" value="Med6"/>
    <property type="match status" value="1"/>
</dbReference>
<dbReference type="PIRSF" id="PIRSF013286">
    <property type="entry name" value="MED6_fungi"/>
    <property type="match status" value="1"/>
</dbReference>
<feature type="chain" id="PRO_0000303054" description="Mediator of RNA polymerase II transcription subunit 6">
    <location>
        <begin position="1"/>
        <end position="302"/>
    </location>
</feature>
<feature type="region of interest" description="Disordered" evidence="2">
    <location>
        <begin position="260"/>
        <end position="281"/>
    </location>
</feature>